<organism>
    <name type="scientific">Bacillus subtilis (strain 168)</name>
    <dbReference type="NCBI Taxonomy" id="224308"/>
    <lineage>
        <taxon>Bacteria</taxon>
        <taxon>Bacillati</taxon>
        <taxon>Bacillota</taxon>
        <taxon>Bacilli</taxon>
        <taxon>Bacillales</taxon>
        <taxon>Bacillaceae</taxon>
        <taxon>Bacillus</taxon>
    </lineage>
</organism>
<proteinExistence type="inferred from homology"/>
<keyword id="KW-0489">Methyltransferase</keyword>
<keyword id="KW-1185">Reference proteome</keyword>
<keyword id="KW-0949">S-adenosyl-L-methionine</keyword>
<keyword id="KW-0808">Transferase</keyword>
<name>YQEM_BACSU</name>
<feature type="chain" id="PRO_0000049788" description="Putative methyltransferase YqeM">
    <location>
        <begin position="1"/>
        <end position="247"/>
    </location>
</feature>
<dbReference type="EC" id="2.1.1.-"/>
<dbReference type="EMBL" id="D84432">
    <property type="protein sequence ID" value="BAA12450.1"/>
    <property type="molecule type" value="Genomic_DNA"/>
</dbReference>
<dbReference type="EMBL" id="AL009126">
    <property type="protein sequence ID" value="CAB14503.1"/>
    <property type="molecule type" value="Genomic_DNA"/>
</dbReference>
<dbReference type="EMBL" id="L15202">
    <property type="status" value="NOT_ANNOTATED_CDS"/>
    <property type="molecule type" value="Unassigned_DNA"/>
</dbReference>
<dbReference type="PIR" id="A69952">
    <property type="entry name" value="A69952"/>
</dbReference>
<dbReference type="RefSeq" id="NP_390439.1">
    <property type="nucleotide sequence ID" value="NC_000964.3"/>
</dbReference>
<dbReference type="RefSeq" id="WP_003229973.1">
    <property type="nucleotide sequence ID" value="NZ_OZ025638.1"/>
</dbReference>
<dbReference type="SMR" id="P54458"/>
<dbReference type="FunCoup" id="P54458">
    <property type="interactions" value="179"/>
</dbReference>
<dbReference type="STRING" id="224308.BSU25610"/>
<dbReference type="PaxDb" id="224308-BSU25610"/>
<dbReference type="EnsemblBacteria" id="CAB14503">
    <property type="protein sequence ID" value="CAB14503"/>
    <property type="gene ID" value="BSU_25610"/>
</dbReference>
<dbReference type="GeneID" id="937826"/>
<dbReference type="KEGG" id="bsu:BSU25610"/>
<dbReference type="PATRIC" id="fig|224308.179.peg.2784"/>
<dbReference type="eggNOG" id="COG2226">
    <property type="taxonomic scope" value="Bacteria"/>
</dbReference>
<dbReference type="InParanoid" id="P54458"/>
<dbReference type="OrthoDB" id="9811589at2"/>
<dbReference type="PhylomeDB" id="P54458"/>
<dbReference type="BioCyc" id="BSUB:BSU25610-MONOMER"/>
<dbReference type="Proteomes" id="UP000001570">
    <property type="component" value="Chromosome"/>
</dbReference>
<dbReference type="GO" id="GO:0008168">
    <property type="term" value="F:methyltransferase activity"/>
    <property type="evidence" value="ECO:0007669"/>
    <property type="project" value="UniProtKB-KW"/>
</dbReference>
<dbReference type="GO" id="GO:0032259">
    <property type="term" value="P:methylation"/>
    <property type="evidence" value="ECO:0007669"/>
    <property type="project" value="UniProtKB-KW"/>
</dbReference>
<dbReference type="CDD" id="cd02440">
    <property type="entry name" value="AdoMet_MTases"/>
    <property type="match status" value="1"/>
</dbReference>
<dbReference type="Gene3D" id="2.20.25.110">
    <property type="entry name" value="S-adenosyl-L-methionine-dependent methyltransferases"/>
    <property type="match status" value="1"/>
</dbReference>
<dbReference type="Gene3D" id="3.40.50.150">
    <property type="entry name" value="Vaccinia Virus protein VP39"/>
    <property type="match status" value="1"/>
</dbReference>
<dbReference type="InterPro" id="IPR041698">
    <property type="entry name" value="Methyltransf_25"/>
</dbReference>
<dbReference type="InterPro" id="IPR029063">
    <property type="entry name" value="SAM-dependent_MTases_sf"/>
</dbReference>
<dbReference type="PANTHER" id="PTHR43861:SF1">
    <property type="entry name" value="TRANS-ACONITATE 2-METHYLTRANSFERASE"/>
    <property type="match status" value="1"/>
</dbReference>
<dbReference type="PANTHER" id="PTHR43861">
    <property type="entry name" value="TRANS-ACONITATE 2-METHYLTRANSFERASE-RELATED"/>
    <property type="match status" value="1"/>
</dbReference>
<dbReference type="Pfam" id="PF13649">
    <property type="entry name" value="Methyltransf_25"/>
    <property type="match status" value="1"/>
</dbReference>
<dbReference type="SUPFAM" id="SSF53335">
    <property type="entry name" value="S-adenosyl-L-methionine-dependent methyltransferases"/>
    <property type="match status" value="1"/>
</dbReference>
<sequence>MIYQGFASVYDELMSHAPYDQWTKWIEASLPEKGRILDLACGTGEISIRLAEKGFEVTGIDLSEEMLSFAQQKVSSSQPILFLQQDMREITGFDGQFDAVVICCDSLNYLKTKNDVIETFKSVFRVLKPEGILLFDVHSSFKIAEVFPDSTFADQDEDISYIWQSFAGSDELSVIHDMSFFVWNGEAYDRFDETHEQRTFPVEEYEEMLKNCGFQLHRVTADFTDTEPSAQSERLFFKAQKSKTIVS</sequence>
<protein>
    <recommendedName>
        <fullName>Putative methyltransferase YqeM</fullName>
        <ecNumber>2.1.1.-</ecNumber>
    </recommendedName>
</protein>
<accession>P54458</accession>
<evidence type="ECO:0000305" key="1"/>
<gene>
    <name type="primary">yqeM</name>
    <name type="ordered locus">BSU25610</name>
</gene>
<reference key="1">
    <citation type="journal article" date="1996" name="Microbiology">
        <title>Systematic sequencing of the 283 kb 210 degrees-232 degrees region of the Bacillus subtilis genome containing the skin element and many sporulation genes.</title>
        <authorList>
            <person name="Mizuno M."/>
            <person name="Masuda S."/>
            <person name="Takemaru K."/>
            <person name="Hosono S."/>
            <person name="Sato T."/>
            <person name="Takeuchi M."/>
            <person name="Kobayashi Y."/>
        </authorList>
    </citation>
    <scope>NUCLEOTIDE SEQUENCE [GENOMIC DNA]</scope>
    <source>
        <strain>168 / JH642</strain>
    </source>
</reference>
<reference key="2">
    <citation type="journal article" date="1997" name="Nature">
        <title>The complete genome sequence of the Gram-positive bacterium Bacillus subtilis.</title>
        <authorList>
            <person name="Kunst F."/>
            <person name="Ogasawara N."/>
            <person name="Moszer I."/>
            <person name="Albertini A.M."/>
            <person name="Alloni G."/>
            <person name="Azevedo V."/>
            <person name="Bertero M.G."/>
            <person name="Bessieres P."/>
            <person name="Bolotin A."/>
            <person name="Borchert S."/>
            <person name="Borriss R."/>
            <person name="Boursier L."/>
            <person name="Brans A."/>
            <person name="Braun M."/>
            <person name="Brignell S.C."/>
            <person name="Bron S."/>
            <person name="Brouillet S."/>
            <person name="Bruschi C.V."/>
            <person name="Caldwell B."/>
            <person name="Capuano V."/>
            <person name="Carter N.M."/>
            <person name="Choi S.-K."/>
            <person name="Codani J.-J."/>
            <person name="Connerton I.F."/>
            <person name="Cummings N.J."/>
            <person name="Daniel R.A."/>
            <person name="Denizot F."/>
            <person name="Devine K.M."/>
            <person name="Duesterhoeft A."/>
            <person name="Ehrlich S.D."/>
            <person name="Emmerson P.T."/>
            <person name="Entian K.-D."/>
            <person name="Errington J."/>
            <person name="Fabret C."/>
            <person name="Ferrari E."/>
            <person name="Foulger D."/>
            <person name="Fritz C."/>
            <person name="Fujita M."/>
            <person name="Fujita Y."/>
            <person name="Fuma S."/>
            <person name="Galizzi A."/>
            <person name="Galleron N."/>
            <person name="Ghim S.-Y."/>
            <person name="Glaser P."/>
            <person name="Goffeau A."/>
            <person name="Golightly E.J."/>
            <person name="Grandi G."/>
            <person name="Guiseppi G."/>
            <person name="Guy B.J."/>
            <person name="Haga K."/>
            <person name="Haiech J."/>
            <person name="Harwood C.R."/>
            <person name="Henaut A."/>
            <person name="Hilbert H."/>
            <person name="Holsappel S."/>
            <person name="Hosono S."/>
            <person name="Hullo M.-F."/>
            <person name="Itaya M."/>
            <person name="Jones L.-M."/>
            <person name="Joris B."/>
            <person name="Karamata D."/>
            <person name="Kasahara Y."/>
            <person name="Klaerr-Blanchard M."/>
            <person name="Klein C."/>
            <person name="Kobayashi Y."/>
            <person name="Koetter P."/>
            <person name="Koningstein G."/>
            <person name="Krogh S."/>
            <person name="Kumano M."/>
            <person name="Kurita K."/>
            <person name="Lapidus A."/>
            <person name="Lardinois S."/>
            <person name="Lauber J."/>
            <person name="Lazarevic V."/>
            <person name="Lee S.-M."/>
            <person name="Levine A."/>
            <person name="Liu H."/>
            <person name="Masuda S."/>
            <person name="Mauel C."/>
            <person name="Medigue C."/>
            <person name="Medina N."/>
            <person name="Mellado R.P."/>
            <person name="Mizuno M."/>
            <person name="Moestl D."/>
            <person name="Nakai S."/>
            <person name="Noback M."/>
            <person name="Noone D."/>
            <person name="O'Reilly M."/>
            <person name="Ogawa K."/>
            <person name="Ogiwara A."/>
            <person name="Oudega B."/>
            <person name="Park S.-H."/>
            <person name="Parro V."/>
            <person name="Pohl T.M."/>
            <person name="Portetelle D."/>
            <person name="Porwollik S."/>
            <person name="Prescott A.M."/>
            <person name="Presecan E."/>
            <person name="Pujic P."/>
            <person name="Purnelle B."/>
            <person name="Rapoport G."/>
            <person name="Rey M."/>
            <person name="Reynolds S."/>
            <person name="Rieger M."/>
            <person name="Rivolta C."/>
            <person name="Rocha E."/>
            <person name="Roche B."/>
            <person name="Rose M."/>
            <person name="Sadaie Y."/>
            <person name="Sato T."/>
            <person name="Scanlan E."/>
            <person name="Schleich S."/>
            <person name="Schroeter R."/>
            <person name="Scoffone F."/>
            <person name="Sekiguchi J."/>
            <person name="Sekowska A."/>
            <person name="Seror S.J."/>
            <person name="Serror P."/>
            <person name="Shin B.-S."/>
            <person name="Soldo B."/>
            <person name="Sorokin A."/>
            <person name="Tacconi E."/>
            <person name="Takagi T."/>
            <person name="Takahashi H."/>
            <person name="Takemaru K."/>
            <person name="Takeuchi M."/>
            <person name="Tamakoshi A."/>
            <person name="Tanaka T."/>
            <person name="Terpstra P."/>
            <person name="Tognoni A."/>
            <person name="Tosato V."/>
            <person name="Uchiyama S."/>
            <person name="Vandenbol M."/>
            <person name="Vannier F."/>
            <person name="Vassarotti A."/>
            <person name="Viari A."/>
            <person name="Wambutt R."/>
            <person name="Wedler E."/>
            <person name="Wedler H."/>
            <person name="Weitzenegger T."/>
            <person name="Winters P."/>
            <person name="Wipat A."/>
            <person name="Yamamoto H."/>
            <person name="Yamane K."/>
            <person name="Yasumoto K."/>
            <person name="Yata K."/>
            <person name="Yoshida K."/>
            <person name="Yoshikawa H.-F."/>
            <person name="Zumstein E."/>
            <person name="Yoshikawa H."/>
            <person name="Danchin A."/>
        </authorList>
    </citation>
    <scope>NUCLEOTIDE SEQUENCE [LARGE SCALE GENOMIC DNA]</scope>
    <source>
        <strain>168</strain>
    </source>
</reference>
<reference key="3">
    <citation type="journal article" date="1993" name="Mol. Microbiol.">
        <title>Characterization of comE, a late competence operon of Bacillus subtilis required for the binding and uptake of transforming DNA.</title>
        <authorList>
            <person name="Hahn J."/>
            <person name="Inamine G."/>
            <person name="Kozlov Y."/>
            <person name="Dubnau D.A."/>
        </authorList>
    </citation>
    <scope>NUCLEOTIDE SEQUENCE [GENOMIC DNA] OF 124-247</scope>
</reference>
<comment type="function">
    <text>May be a S-adenosyl-L-methionine (SAM)-dependent methyltransferase.</text>
</comment>
<comment type="similarity">
    <text evidence="1">Belongs to the methyltransferase superfamily.</text>
</comment>